<protein>
    <recommendedName>
        <fullName evidence="1">Triosephosphate isomerase</fullName>
        <shortName evidence="1">TIM</shortName>
        <shortName evidence="1">TPI</shortName>
        <ecNumber evidence="1">5.3.1.1</ecNumber>
    </recommendedName>
    <alternativeName>
        <fullName evidence="1">Triose-phosphate isomerase</fullName>
    </alternativeName>
</protein>
<sequence length="249" mass="26718">MRKPVMAGNWKMYKTPAETIAFFEKFRPLVEKSSHCEIVICPPFTNLAAAVDAVRGTSIRVGAQNVGWAKEGAFTGEVSGPMLNAMGVSHVIIGHSERRQYFNETDETVLKRTQAALEFGLTPIVCVGELLADREGGRTEAVLAGQFQKGIAGLTEQQFAKIVIAYEPVWAIGTGKTATPEIAADTHRAIRGQVREKFGKEAADAVRILYGGSVKPDNAKVLMGQPEIDGVLVGGAALDPVSFASIVNF</sequence>
<gene>
    <name evidence="1" type="primary">tpiA</name>
    <name type="ordered locus">Acid_6502</name>
</gene>
<keyword id="KW-0963">Cytoplasm</keyword>
<keyword id="KW-0312">Gluconeogenesis</keyword>
<keyword id="KW-0324">Glycolysis</keyword>
<keyword id="KW-0413">Isomerase</keyword>
<name>TPIS_SOLUE</name>
<comment type="function">
    <text evidence="1">Involved in the gluconeogenesis. Catalyzes stereospecifically the conversion of dihydroxyacetone phosphate (DHAP) to D-glyceraldehyde-3-phosphate (G3P).</text>
</comment>
<comment type="catalytic activity">
    <reaction evidence="1">
        <text>D-glyceraldehyde 3-phosphate = dihydroxyacetone phosphate</text>
        <dbReference type="Rhea" id="RHEA:18585"/>
        <dbReference type="ChEBI" id="CHEBI:57642"/>
        <dbReference type="ChEBI" id="CHEBI:59776"/>
        <dbReference type="EC" id="5.3.1.1"/>
    </reaction>
</comment>
<comment type="pathway">
    <text evidence="1">Carbohydrate biosynthesis; gluconeogenesis.</text>
</comment>
<comment type="pathway">
    <text evidence="1">Carbohydrate degradation; glycolysis; D-glyceraldehyde 3-phosphate from glycerone phosphate: step 1/1.</text>
</comment>
<comment type="subunit">
    <text evidence="1">Homodimer.</text>
</comment>
<comment type="subcellular location">
    <subcellularLocation>
        <location evidence="1">Cytoplasm</location>
    </subcellularLocation>
</comment>
<comment type="similarity">
    <text evidence="1">Belongs to the triosephosphate isomerase family.</text>
</comment>
<accession>Q01SE4</accession>
<dbReference type="EC" id="5.3.1.1" evidence="1"/>
<dbReference type="EMBL" id="CP000473">
    <property type="protein sequence ID" value="ABJ87426.1"/>
    <property type="molecule type" value="Genomic_DNA"/>
</dbReference>
<dbReference type="SMR" id="Q01SE4"/>
<dbReference type="FunCoup" id="Q01SE4">
    <property type="interactions" value="625"/>
</dbReference>
<dbReference type="STRING" id="234267.Acid_6502"/>
<dbReference type="KEGG" id="sus:Acid_6502"/>
<dbReference type="eggNOG" id="COG0149">
    <property type="taxonomic scope" value="Bacteria"/>
</dbReference>
<dbReference type="HOGENOM" id="CLU_024251_2_3_0"/>
<dbReference type="InParanoid" id="Q01SE4"/>
<dbReference type="OrthoDB" id="9809429at2"/>
<dbReference type="UniPathway" id="UPA00109">
    <property type="reaction ID" value="UER00189"/>
</dbReference>
<dbReference type="UniPathway" id="UPA00138"/>
<dbReference type="GO" id="GO:0005829">
    <property type="term" value="C:cytosol"/>
    <property type="evidence" value="ECO:0007669"/>
    <property type="project" value="TreeGrafter"/>
</dbReference>
<dbReference type="GO" id="GO:0004807">
    <property type="term" value="F:triose-phosphate isomerase activity"/>
    <property type="evidence" value="ECO:0007669"/>
    <property type="project" value="UniProtKB-UniRule"/>
</dbReference>
<dbReference type="GO" id="GO:0006094">
    <property type="term" value="P:gluconeogenesis"/>
    <property type="evidence" value="ECO:0007669"/>
    <property type="project" value="UniProtKB-UniRule"/>
</dbReference>
<dbReference type="GO" id="GO:0046166">
    <property type="term" value="P:glyceraldehyde-3-phosphate biosynthetic process"/>
    <property type="evidence" value="ECO:0007669"/>
    <property type="project" value="TreeGrafter"/>
</dbReference>
<dbReference type="GO" id="GO:0019563">
    <property type="term" value="P:glycerol catabolic process"/>
    <property type="evidence" value="ECO:0007669"/>
    <property type="project" value="TreeGrafter"/>
</dbReference>
<dbReference type="GO" id="GO:0006096">
    <property type="term" value="P:glycolytic process"/>
    <property type="evidence" value="ECO:0007669"/>
    <property type="project" value="UniProtKB-UniRule"/>
</dbReference>
<dbReference type="CDD" id="cd00311">
    <property type="entry name" value="TIM"/>
    <property type="match status" value="1"/>
</dbReference>
<dbReference type="FunFam" id="3.20.20.70:FF:000016">
    <property type="entry name" value="Triosephosphate isomerase"/>
    <property type="match status" value="1"/>
</dbReference>
<dbReference type="Gene3D" id="3.20.20.70">
    <property type="entry name" value="Aldolase class I"/>
    <property type="match status" value="1"/>
</dbReference>
<dbReference type="HAMAP" id="MF_00147_B">
    <property type="entry name" value="TIM_B"/>
    <property type="match status" value="1"/>
</dbReference>
<dbReference type="InterPro" id="IPR013785">
    <property type="entry name" value="Aldolase_TIM"/>
</dbReference>
<dbReference type="InterPro" id="IPR035990">
    <property type="entry name" value="TIM_sf"/>
</dbReference>
<dbReference type="InterPro" id="IPR022896">
    <property type="entry name" value="TrioseP_Isoase_bac/euk"/>
</dbReference>
<dbReference type="InterPro" id="IPR000652">
    <property type="entry name" value="Triosephosphate_isomerase"/>
</dbReference>
<dbReference type="InterPro" id="IPR020861">
    <property type="entry name" value="Triosephosphate_isomerase_AS"/>
</dbReference>
<dbReference type="NCBIfam" id="TIGR00419">
    <property type="entry name" value="tim"/>
    <property type="match status" value="1"/>
</dbReference>
<dbReference type="PANTHER" id="PTHR21139">
    <property type="entry name" value="TRIOSEPHOSPHATE ISOMERASE"/>
    <property type="match status" value="1"/>
</dbReference>
<dbReference type="PANTHER" id="PTHR21139:SF42">
    <property type="entry name" value="TRIOSEPHOSPHATE ISOMERASE"/>
    <property type="match status" value="1"/>
</dbReference>
<dbReference type="Pfam" id="PF00121">
    <property type="entry name" value="TIM"/>
    <property type="match status" value="1"/>
</dbReference>
<dbReference type="SUPFAM" id="SSF51351">
    <property type="entry name" value="Triosephosphate isomerase (TIM)"/>
    <property type="match status" value="1"/>
</dbReference>
<dbReference type="PROSITE" id="PS00171">
    <property type="entry name" value="TIM_1"/>
    <property type="match status" value="1"/>
</dbReference>
<dbReference type="PROSITE" id="PS51440">
    <property type="entry name" value="TIM_2"/>
    <property type="match status" value="1"/>
</dbReference>
<reference key="1">
    <citation type="journal article" date="2009" name="Appl. Environ. Microbiol.">
        <title>Three genomes from the phylum Acidobacteria provide insight into the lifestyles of these microorganisms in soils.</title>
        <authorList>
            <person name="Ward N.L."/>
            <person name="Challacombe J.F."/>
            <person name="Janssen P.H."/>
            <person name="Henrissat B."/>
            <person name="Coutinho P.M."/>
            <person name="Wu M."/>
            <person name="Xie G."/>
            <person name="Haft D.H."/>
            <person name="Sait M."/>
            <person name="Badger J."/>
            <person name="Barabote R.D."/>
            <person name="Bradley B."/>
            <person name="Brettin T.S."/>
            <person name="Brinkac L.M."/>
            <person name="Bruce D."/>
            <person name="Creasy T."/>
            <person name="Daugherty S.C."/>
            <person name="Davidsen T.M."/>
            <person name="DeBoy R.T."/>
            <person name="Detter J.C."/>
            <person name="Dodson R.J."/>
            <person name="Durkin A.S."/>
            <person name="Ganapathy A."/>
            <person name="Gwinn-Giglio M."/>
            <person name="Han C.S."/>
            <person name="Khouri H."/>
            <person name="Kiss H."/>
            <person name="Kothari S.P."/>
            <person name="Madupu R."/>
            <person name="Nelson K.E."/>
            <person name="Nelson W.C."/>
            <person name="Paulsen I."/>
            <person name="Penn K."/>
            <person name="Ren Q."/>
            <person name="Rosovitz M.J."/>
            <person name="Selengut J.D."/>
            <person name="Shrivastava S."/>
            <person name="Sullivan S.A."/>
            <person name="Tapia R."/>
            <person name="Thompson L.S."/>
            <person name="Watkins K.L."/>
            <person name="Yang Q."/>
            <person name="Yu C."/>
            <person name="Zafar N."/>
            <person name="Zhou L."/>
            <person name="Kuske C.R."/>
        </authorList>
    </citation>
    <scope>NUCLEOTIDE SEQUENCE [LARGE SCALE GENOMIC DNA]</scope>
    <source>
        <strain>Ellin6076</strain>
    </source>
</reference>
<evidence type="ECO:0000255" key="1">
    <source>
        <dbReference type="HAMAP-Rule" id="MF_00147"/>
    </source>
</evidence>
<organism>
    <name type="scientific">Solibacter usitatus (strain Ellin6076)</name>
    <dbReference type="NCBI Taxonomy" id="234267"/>
    <lineage>
        <taxon>Bacteria</taxon>
        <taxon>Pseudomonadati</taxon>
        <taxon>Acidobacteriota</taxon>
        <taxon>Terriglobia</taxon>
        <taxon>Bryobacterales</taxon>
        <taxon>Solibacteraceae</taxon>
        <taxon>Candidatus Solibacter</taxon>
    </lineage>
</organism>
<feature type="chain" id="PRO_0000307565" description="Triosephosphate isomerase">
    <location>
        <begin position="1"/>
        <end position="249"/>
    </location>
</feature>
<feature type="active site" description="Electrophile" evidence="1">
    <location>
        <position position="95"/>
    </location>
</feature>
<feature type="active site" description="Proton acceptor" evidence="1">
    <location>
        <position position="167"/>
    </location>
</feature>
<feature type="binding site" evidence="1">
    <location>
        <begin position="9"/>
        <end position="11"/>
    </location>
    <ligand>
        <name>substrate</name>
    </ligand>
</feature>
<feature type="binding site" evidence="1">
    <location>
        <position position="173"/>
    </location>
    <ligand>
        <name>substrate</name>
    </ligand>
</feature>
<feature type="binding site" evidence="1">
    <location>
        <position position="213"/>
    </location>
    <ligand>
        <name>substrate</name>
    </ligand>
</feature>
<feature type="binding site" evidence="1">
    <location>
        <begin position="234"/>
        <end position="235"/>
    </location>
    <ligand>
        <name>substrate</name>
    </ligand>
</feature>
<proteinExistence type="inferred from homology"/>